<name>DCNL5_PONAB</name>
<proteinExistence type="evidence at transcript level"/>
<evidence type="ECO:0000250" key="1">
    <source>
        <dbReference type="UniProtKB" id="Q9BTE7"/>
    </source>
</evidence>
<evidence type="ECO:0000250" key="2">
    <source>
        <dbReference type="UniProtKB" id="Q9CXV9"/>
    </source>
</evidence>
<evidence type="ECO:0000255" key="3">
    <source>
        <dbReference type="PROSITE-ProRule" id="PRU00574"/>
    </source>
</evidence>
<organism>
    <name type="scientific">Pongo abelii</name>
    <name type="common">Sumatran orangutan</name>
    <name type="synonym">Pongo pygmaeus abelii</name>
    <dbReference type="NCBI Taxonomy" id="9601"/>
    <lineage>
        <taxon>Eukaryota</taxon>
        <taxon>Metazoa</taxon>
        <taxon>Chordata</taxon>
        <taxon>Craniata</taxon>
        <taxon>Vertebrata</taxon>
        <taxon>Euteleostomi</taxon>
        <taxon>Mammalia</taxon>
        <taxon>Eutheria</taxon>
        <taxon>Euarchontoglires</taxon>
        <taxon>Primates</taxon>
        <taxon>Haplorrhini</taxon>
        <taxon>Catarrhini</taxon>
        <taxon>Hominidae</taxon>
        <taxon>Pongo</taxon>
    </lineage>
</organism>
<feature type="chain" id="PRO_0000254173" description="DCN1-like protein 5">
    <location>
        <begin position="1"/>
        <end position="237"/>
    </location>
</feature>
<feature type="domain" description="DCUN1" evidence="3">
    <location>
        <begin position="46"/>
        <end position="232"/>
    </location>
</feature>
<feature type="modified residue" description="Phosphoserine" evidence="1">
    <location>
        <position position="9"/>
    </location>
</feature>
<feature type="modified residue" description="Phosphoserine" evidence="1">
    <location>
        <position position="41"/>
    </location>
</feature>
<feature type="modified residue" description="Phosphoserine" evidence="1">
    <location>
        <position position="48"/>
    </location>
</feature>
<dbReference type="EMBL" id="CR857952">
    <property type="protein sequence ID" value="CAH90198.1"/>
    <property type="molecule type" value="mRNA"/>
</dbReference>
<dbReference type="RefSeq" id="NP_001128970.1">
    <property type="nucleotide sequence ID" value="NM_001135498.1"/>
</dbReference>
<dbReference type="SMR" id="Q5RDF9"/>
<dbReference type="STRING" id="9601.ENSPPYP00000004365"/>
<dbReference type="GeneID" id="100190810"/>
<dbReference type="KEGG" id="pon:100190810"/>
<dbReference type="CTD" id="84259"/>
<dbReference type="eggNOG" id="KOG3077">
    <property type="taxonomic scope" value="Eukaryota"/>
</dbReference>
<dbReference type="InParanoid" id="Q5RDF9"/>
<dbReference type="OrthoDB" id="286637at2759"/>
<dbReference type="Proteomes" id="UP000001595">
    <property type="component" value="Unplaced"/>
</dbReference>
<dbReference type="GO" id="GO:0005737">
    <property type="term" value="C:cytoplasm"/>
    <property type="evidence" value="ECO:0007669"/>
    <property type="project" value="UniProtKB-KW"/>
</dbReference>
<dbReference type="GO" id="GO:0005634">
    <property type="term" value="C:nucleus"/>
    <property type="evidence" value="ECO:0000314"/>
    <property type="project" value="UniProtKB"/>
</dbReference>
<dbReference type="GO" id="GO:0005819">
    <property type="term" value="C:spindle"/>
    <property type="evidence" value="ECO:0000250"/>
    <property type="project" value="UniProtKB"/>
</dbReference>
<dbReference type="GO" id="GO:0000151">
    <property type="term" value="C:ubiquitin ligase complex"/>
    <property type="evidence" value="ECO:0007669"/>
    <property type="project" value="TreeGrafter"/>
</dbReference>
<dbReference type="GO" id="GO:0097602">
    <property type="term" value="F:cullin family protein binding"/>
    <property type="evidence" value="ECO:0000250"/>
    <property type="project" value="UniProtKB"/>
</dbReference>
<dbReference type="GO" id="GO:0031624">
    <property type="term" value="F:ubiquitin conjugating enzyme binding"/>
    <property type="evidence" value="ECO:0007669"/>
    <property type="project" value="TreeGrafter"/>
</dbReference>
<dbReference type="GO" id="GO:0032182">
    <property type="term" value="F:ubiquitin-like protein binding"/>
    <property type="evidence" value="ECO:0007669"/>
    <property type="project" value="TreeGrafter"/>
</dbReference>
<dbReference type="GO" id="GO:0006974">
    <property type="term" value="P:DNA damage response"/>
    <property type="evidence" value="ECO:0000250"/>
    <property type="project" value="UniProtKB"/>
</dbReference>
<dbReference type="GO" id="GO:2000436">
    <property type="term" value="P:positive regulation of protein neddylation"/>
    <property type="evidence" value="ECO:0000250"/>
    <property type="project" value="UniProtKB"/>
</dbReference>
<dbReference type="GO" id="GO:0045116">
    <property type="term" value="P:protein neddylation"/>
    <property type="evidence" value="ECO:0007669"/>
    <property type="project" value="TreeGrafter"/>
</dbReference>
<dbReference type="GO" id="GO:0001558">
    <property type="term" value="P:regulation of cell growth"/>
    <property type="evidence" value="ECO:0000250"/>
    <property type="project" value="UniProtKB"/>
</dbReference>
<dbReference type="GO" id="GO:2000434">
    <property type="term" value="P:regulation of protein neddylation"/>
    <property type="evidence" value="ECO:0000250"/>
    <property type="project" value="UniProtKB"/>
</dbReference>
<dbReference type="FunFam" id="1.10.238.10:FF:000041">
    <property type="entry name" value="DCN1-like protein"/>
    <property type="match status" value="1"/>
</dbReference>
<dbReference type="FunFam" id="1.10.238.200:FF:000002">
    <property type="entry name" value="DCN1-like protein"/>
    <property type="match status" value="1"/>
</dbReference>
<dbReference type="Gene3D" id="1.10.238.200">
    <property type="entry name" value="Cullin, PONY binding domain"/>
    <property type="match status" value="1"/>
</dbReference>
<dbReference type="Gene3D" id="1.10.238.10">
    <property type="entry name" value="EF-hand"/>
    <property type="match status" value="1"/>
</dbReference>
<dbReference type="InterPro" id="IPR014764">
    <property type="entry name" value="DCN-prot"/>
</dbReference>
<dbReference type="InterPro" id="IPR042460">
    <property type="entry name" value="DCN1-like_PONY"/>
</dbReference>
<dbReference type="InterPro" id="IPR005176">
    <property type="entry name" value="PONY_dom"/>
</dbReference>
<dbReference type="PANTHER" id="PTHR12281:SF6">
    <property type="entry name" value="DCN1-LIKE PROTEIN 5"/>
    <property type="match status" value="1"/>
</dbReference>
<dbReference type="PANTHER" id="PTHR12281">
    <property type="entry name" value="RP42 RELATED"/>
    <property type="match status" value="1"/>
</dbReference>
<dbReference type="Pfam" id="PF03556">
    <property type="entry name" value="Cullin_binding"/>
    <property type="match status" value="1"/>
</dbReference>
<dbReference type="PROSITE" id="PS51229">
    <property type="entry name" value="DCUN1"/>
    <property type="match status" value="1"/>
</dbReference>
<keyword id="KW-0963">Cytoplasm</keyword>
<keyword id="KW-0206">Cytoskeleton</keyword>
<keyword id="KW-0539">Nucleus</keyword>
<keyword id="KW-0597">Phosphoprotein</keyword>
<keyword id="KW-1185">Reference proteome</keyword>
<gene>
    <name evidence="1" type="primary">DCUN1D5</name>
</gene>
<protein>
    <recommendedName>
        <fullName evidence="1">DCN1-like protein 5</fullName>
    </recommendedName>
    <alternativeName>
        <fullName>DCUN1 domain-containing protein 5</fullName>
    </alternativeName>
    <alternativeName>
        <fullName>Defective in cullin neddylation protein 1-like protein 5</fullName>
    </alternativeName>
    <alternativeName>
        <fullName evidence="1">Squamous cell carcinoma-related oncogene 5</fullName>
    </alternativeName>
</protein>
<comment type="function">
    <text evidence="1">Contributes to the neddylation of all cullins by transferring NEDD8 from N-terminally acetylated NEDD8-conjugating E2s enzyme to different cullin C-terminal domain-RBX complexes which is necessary for the activation of cullin-RING E3 ubiquitin ligases (CRLs). May play a role in DNA damage response and may participate in cell proliferation and anchorage-independent cell growth.</text>
</comment>
<comment type="subunit">
    <text evidence="1">Part of a complex that contains DCUN1D5, CUL1 and RBX1; this interaction is bridged by CUL1. Interacts (via the DCUN1 domain) with the unneddylated cullins: interacts with CUL1, CUL2, CUL3, CUL4A, CUL4B and CUL5; these interactions promote the cullin neddylation and the identity of the cullin dictates the affinity of the interaction. Interacts (via DCUN1 domain) with UBE2M (N-terminally acetylated form) and probably with UBE2F (N-terminally acetylated form). May also interact with regulators or subunits of cullin-RING ligases such as RBX1, RNF7, ELOB and DDB1; these interactions are bridged by cullins. Interacts with CAND1; this interaction is bridged by cullins and strongly inhibits the neddylation of cullins. These CAND-cullin-DCNL complexes can only be neddylated in the presence of a substrate adapter.</text>
</comment>
<comment type="subcellular location">
    <subcellularLocation>
        <location evidence="1">Nucleus</location>
    </subcellularLocation>
    <subcellularLocation>
        <location evidence="1">Cytoplasm</location>
        <location evidence="1">Cytoskeleton</location>
        <location evidence="1">Spindle</location>
    </subcellularLocation>
    <text evidence="1">Subcellular localization is independent of the interaction with cullins.</text>
</comment>
<comment type="domain">
    <text evidence="1">The DCUN1 domain, also known as PONY domain, mediates the interaction with different cullins. The DCUN1 domain mediates the interaction with the N-terminally acetylated NEDD8-conjugating E2s enzyme leading to the NEDD8 transfer from N-terminally acetylated NEDD8-conjugating E2s enzyme to different cullin C-terminal domain-RBX complexes; the neddylation efficiency correlates with the DCUN1D5-cullin and DCUN1D5-E2 interaction affinities.</text>
</comment>
<comment type="PTM">
    <text evidence="1 2">Phosphorylation at Ser-41 is independent of cullin's interaction. Phosphorylated in response to both TICAM1 and MYD88 dependent Toll-like receptor (TLR) pathway activation (By similarity). Phosphorylated in response to IL1B stimulation (By similarity).</text>
</comment>
<reference key="1">
    <citation type="submission" date="2004-11" db="EMBL/GenBank/DDBJ databases">
        <authorList>
            <consortium name="The German cDNA consortium"/>
        </authorList>
    </citation>
    <scope>NUCLEOTIDE SEQUENCE [LARGE SCALE MRNA]</scope>
    <source>
        <tissue>Kidney</tissue>
    </source>
</reference>
<accession>Q5RDF9</accession>
<sequence length="237" mass="27462">MPVKKKRKSPGVAAAVAEDGGLKKCKISSYCRSQPPARLISGEEHFSSKKCLAWFYEYAGPDEVVGPEGMEKFCEDIGVEPENIIMLVLAWKLEAESMGFFTKEEWLKGMTSLQCDCTEKLQNKFDFLRSQLNDISSFKNIYRYAFDFARDKDQRSLDIDTAKSMLALLLGRTWPLFSVFYQYPEQSKYRVMNKDQWYNVLEFSRAVHADLSNYDEDGAWPVLLDEFVEWQKVRQTS</sequence>